<name>RCL1_ARATH</name>
<reference key="1">
    <citation type="journal article" date="2000" name="Nature">
        <title>Sequence and analysis of chromosome 5 of the plant Arabidopsis thaliana.</title>
        <authorList>
            <person name="Tabata S."/>
            <person name="Kaneko T."/>
            <person name="Nakamura Y."/>
            <person name="Kotani H."/>
            <person name="Kato T."/>
            <person name="Asamizu E."/>
            <person name="Miyajima N."/>
            <person name="Sasamoto S."/>
            <person name="Kimura T."/>
            <person name="Hosouchi T."/>
            <person name="Kawashima K."/>
            <person name="Kohara M."/>
            <person name="Matsumoto M."/>
            <person name="Matsuno A."/>
            <person name="Muraki A."/>
            <person name="Nakayama S."/>
            <person name="Nakazaki N."/>
            <person name="Naruo K."/>
            <person name="Okumura S."/>
            <person name="Shinpo S."/>
            <person name="Takeuchi C."/>
            <person name="Wada T."/>
            <person name="Watanabe A."/>
            <person name="Yamada M."/>
            <person name="Yasuda M."/>
            <person name="Sato S."/>
            <person name="de la Bastide M."/>
            <person name="Huang E."/>
            <person name="Spiegel L."/>
            <person name="Gnoj L."/>
            <person name="O'Shaughnessy A."/>
            <person name="Preston R."/>
            <person name="Habermann K."/>
            <person name="Murray J."/>
            <person name="Johnson D."/>
            <person name="Rohlfing T."/>
            <person name="Nelson J."/>
            <person name="Stoneking T."/>
            <person name="Pepin K."/>
            <person name="Spieth J."/>
            <person name="Sekhon M."/>
            <person name="Armstrong J."/>
            <person name="Becker M."/>
            <person name="Belter E."/>
            <person name="Cordum H."/>
            <person name="Cordes M."/>
            <person name="Courtney L."/>
            <person name="Courtney W."/>
            <person name="Dante M."/>
            <person name="Du H."/>
            <person name="Edwards J."/>
            <person name="Fryman J."/>
            <person name="Haakensen B."/>
            <person name="Lamar E."/>
            <person name="Latreille P."/>
            <person name="Leonard S."/>
            <person name="Meyer R."/>
            <person name="Mulvaney E."/>
            <person name="Ozersky P."/>
            <person name="Riley A."/>
            <person name="Strowmatt C."/>
            <person name="Wagner-McPherson C."/>
            <person name="Wollam A."/>
            <person name="Yoakum M."/>
            <person name="Bell M."/>
            <person name="Dedhia N."/>
            <person name="Parnell L."/>
            <person name="Shah R."/>
            <person name="Rodriguez M."/>
            <person name="Hoon See L."/>
            <person name="Vil D."/>
            <person name="Baker J."/>
            <person name="Kirchoff K."/>
            <person name="Toth K."/>
            <person name="King L."/>
            <person name="Bahret A."/>
            <person name="Miller B."/>
            <person name="Marra M.A."/>
            <person name="Martienssen R."/>
            <person name="McCombie W.R."/>
            <person name="Wilson R.K."/>
            <person name="Murphy G."/>
            <person name="Bancroft I."/>
            <person name="Volckaert G."/>
            <person name="Wambutt R."/>
            <person name="Duesterhoeft A."/>
            <person name="Stiekema W."/>
            <person name="Pohl T."/>
            <person name="Entian K.-D."/>
            <person name="Terryn N."/>
            <person name="Hartley N."/>
            <person name="Bent E."/>
            <person name="Johnson S."/>
            <person name="Langham S.-A."/>
            <person name="McCullagh B."/>
            <person name="Robben J."/>
            <person name="Grymonprez B."/>
            <person name="Zimmermann W."/>
            <person name="Ramsperger U."/>
            <person name="Wedler H."/>
            <person name="Balke K."/>
            <person name="Wedler E."/>
            <person name="Peters S."/>
            <person name="van Staveren M."/>
            <person name="Dirkse W."/>
            <person name="Mooijman P."/>
            <person name="Klein Lankhorst R."/>
            <person name="Weitzenegger T."/>
            <person name="Bothe G."/>
            <person name="Rose M."/>
            <person name="Hauf J."/>
            <person name="Berneiser S."/>
            <person name="Hempel S."/>
            <person name="Feldpausch M."/>
            <person name="Lamberth S."/>
            <person name="Villarroel R."/>
            <person name="Gielen J."/>
            <person name="Ardiles W."/>
            <person name="Bents O."/>
            <person name="Lemcke K."/>
            <person name="Kolesov G."/>
            <person name="Mayer K.F.X."/>
            <person name="Rudd S."/>
            <person name="Schoof H."/>
            <person name="Schueller C."/>
            <person name="Zaccaria P."/>
            <person name="Mewes H.-W."/>
            <person name="Bevan M."/>
            <person name="Fransz P.F."/>
        </authorList>
    </citation>
    <scope>NUCLEOTIDE SEQUENCE [LARGE SCALE GENOMIC DNA]</scope>
    <source>
        <strain>cv. Columbia</strain>
    </source>
</reference>
<reference key="2">
    <citation type="journal article" date="2017" name="Plant J.">
        <title>Araport11: a complete reannotation of the Arabidopsis thaliana reference genome.</title>
        <authorList>
            <person name="Cheng C.Y."/>
            <person name="Krishnakumar V."/>
            <person name="Chan A.P."/>
            <person name="Thibaud-Nissen F."/>
            <person name="Schobel S."/>
            <person name="Town C.D."/>
        </authorList>
    </citation>
    <scope>GENOME REANNOTATION</scope>
    <source>
        <strain>cv. Columbia</strain>
    </source>
</reference>
<reference key="3">
    <citation type="journal article" date="2003" name="Science">
        <title>Empirical analysis of transcriptional activity in the Arabidopsis genome.</title>
        <authorList>
            <person name="Yamada K."/>
            <person name="Lim J."/>
            <person name="Dale J.M."/>
            <person name="Chen H."/>
            <person name="Shinn P."/>
            <person name="Palm C.J."/>
            <person name="Southwick A.M."/>
            <person name="Wu H.C."/>
            <person name="Kim C.J."/>
            <person name="Nguyen M."/>
            <person name="Pham P.K."/>
            <person name="Cheuk R.F."/>
            <person name="Karlin-Newmann G."/>
            <person name="Liu S.X."/>
            <person name="Lam B."/>
            <person name="Sakano H."/>
            <person name="Wu T."/>
            <person name="Yu G."/>
            <person name="Miranda M."/>
            <person name="Quach H.L."/>
            <person name="Tripp M."/>
            <person name="Chang C.H."/>
            <person name="Lee J.M."/>
            <person name="Toriumi M.J."/>
            <person name="Chan M.M."/>
            <person name="Tang C.C."/>
            <person name="Onodera C.S."/>
            <person name="Deng J.M."/>
            <person name="Akiyama K."/>
            <person name="Ansari Y."/>
            <person name="Arakawa T."/>
            <person name="Banh J."/>
            <person name="Banno F."/>
            <person name="Bowser L."/>
            <person name="Brooks S.Y."/>
            <person name="Carninci P."/>
            <person name="Chao Q."/>
            <person name="Choy N."/>
            <person name="Enju A."/>
            <person name="Goldsmith A.D."/>
            <person name="Gurjal M."/>
            <person name="Hansen N.F."/>
            <person name="Hayashizaki Y."/>
            <person name="Johnson-Hopson C."/>
            <person name="Hsuan V.W."/>
            <person name="Iida K."/>
            <person name="Karnes M."/>
            <person name="Khan S."/>
            <person name="Koesema E."/>
            <person name="Ishida J."/>
            <person name="Jiang P.X."/>
            <person name="Jones T."/>
            <person name="Kawai J."/>
            <person name="Kamiya A."/>
            <person name="Meyers C."/>
            <person name="Nakajima M."/>
            <person name="Narusaka M."/>
            <person name="Seki M."/>
            <person name="Sakurai T."/>
            <person name="Satou M."/>
            <person name="Tamse R."/>
            <person name="Vaysberg M."/>
            <person name="Wallender E.K."/>
            <person name="Wong C."/>
            <person name="Yamamura Y."/>
            <person name="Yuan S."/>
            <person name="Shinozaki K."/>
            <person name="Davis R.W."/>
            <person name="Theologis A."/>
            <person name="Ecker J.R."/>
        </authorList>
    </citation>
    <scope>NUCLEOTIDE SEQUENCE [LARGE SCALE MRNA]</scope>
    <source>
        <strain>cv. Columbia</strain>
    </source>
</reference>
<feature type="chain" id="PRO_0000156442" description="Probable RNA 3'-terminal phosphate cyclase-like protein">
    <location>
        <begin position="1"/>
        <end position="375"/>
    </location>
</feature>
<organism>
    <name type="scientific">Arabidopsis thaliana</name>
    <name type="common">Mouse-ear cress</name>
    <dbReference type="NCBI Taxonomy" id="3702"/>
    <lineage>
        <taxon>Eukaryota</taxon>
        <taxon>Viridiplantae</taxon>
        <taxon>Streptophyta</taxon>
        <taxon>Embryophyta</taxon>
        <taxon>Tracheophyta</taxon>
        <taxon>Spermatophyta</taxon>
        <taxon>Magnoliopsida</taxon>
        <taxon>eudicotyledons</taxon>
        <taxon>Gunneridae</taxon>
        <taxon>Pentapetalae</taxon>
        <taxon>rosids</taxon>
        <taxon>malvids</taxon>
        <taxon>Brassicales</taxon>
        <taxon>Brassicaceae</taxon>
        <taxon>Camelineae</taxon>
        <taxon>Arabidopsis</taxon>
    </lineage>
</organism>
<sequence>MVMMKKMKGSQSFRQRLLLSTLSSTPISIDEIRADETIPGLRPHEVNLLRLLEIVTDDAVVDINETGTRLKYKPGTIVGGKNLVHSCSLSRSIGYYLEPLLLLGLFGKKPLSIRLKGITNDPRDASVDTFRSTTLNIIKRFGVPAEDLELKIEARGVAPNGGGEVLLTVPNIKTLSAVHWVEEGMVKKIRGTTFSTRVTSDFEHSMRFAARGIFNNLLPDVHIFQDHRAGAQAGKSPGYGISLAAETTTGCFISADTTVSCERPDETGELDVEKKERSPAEDTGVEVASWLLQEIEKGGVVDSTHQGLLFLLCALSEQDVSKVRVGTLSPYAVETLRNIKEFLGVKFAIKPDPLTGTVILKCTGSGLINLSRKLS</sequence>
<protein>
    <recommendedName>
        <fullName>Probable RNA 3'-terminal phosphate cyclase-like protein</fullName>
    </recommendedName>
</protein>
<dbReference type="EMBL" id="AL589883">
    <property type="protein sequence ID" value="CAC34503.1"/>
    <property type="molecule type" value="Genomic_DNA"/>
</dbReference>
<dbReference type="EMBL" id="CP002688">
    <property type="protein sequence ID" value="AED92983.1"/>
    <property type="molecule type" value="Genomic_DNA"/>
</dbReference>
<dbReference type="EMBL" id="BT002059">
    <property type="protein sequence ID" value="AAN72070.1"/>
    <property type="molecule type" value="mRNA"/>
</dbReference>
<dbReference type="RefSeq" id="NP_680196.1">
    <property type="nucleotide sequence ID" value="NM_147891.4"/>
</dbReference>
<dbReference type="SMR" id="Q9C578"/>
<dbReference type="BioGRID" id="17546">
    <property type="interactions" value="1"/>
</dbReference>
<dbReference type="FunCoup" id="Q9C578">
    <property type="interactions" value="3498"/>
</dbReference>
<dbReference type="STRING" id="3702.Q9C578"/>
<dbReference type="PaxDb" id="3702-AT5G22100.1"/>
<dbReference type="ProteomicsDB" id="236212"/>
<dbReference type="EnsemblPlants" id="AT5G22100.1">
    <property type="protein sequence ID" value="AT5G22100.1"/>
    <property type="gene ID" value="AT5G22100"/>
</dbReference>
<dbReference type="GeneID" id="832271"/>
<dbReference type="Gramene" id="AT5G22100.1">
    <property type="protein sequence ID" value="AT5G22100.1"/>
    <property type="gene ID" value="AT5G22100"/>
</dbReference>
<dbReference type="KEGG" id="ath:AT5G22100"/>
<dbReference type="Araport" id="AT5G22100"/>
<dbReference type="TAIR" id="AT5G22100"/>
<dbReference type="eggNOG" id="KOG3980">
    <property type="taxonomic scope" value="Eukaryota"/>
</dbReference>
<dbReference type="HOGENOM" id="CLU_027882_1_1_1"/>
<dbReference type="InParanoid" id="Q9C578"/>
<dbReference type="OMA" id="YTDQNKG"/>
<dbReference type="OrthoDB" id="1911237at2759"/>
<dbReference type="PhylomeDB" id="Q9C578"/>
<dbReference type="CD-CODE" id="4299E36E">
    <property type="entry name" value="Nucleolus"/>
</dbReference>
<dbReference type="PRO" id="PR:Q9C578"/>
<dbReference type="Proteomes" id="UP000006548">
    <property type="component" value="Chromosome 5"/>
</dbReference>
<dbReference type="ExpressionAtlas" id="Q9C578">
    <property type="expression patterns" value="baseline and differential"/>
</dbReference>
<dbReference type="GO" id="GO:0005730">
    <property type="term" value="C:nucleolus"/>
    <property type="evidence" value="ECO:0007669"/>
    <property type="project" value="UniProtKB-SubCell"/>
</dbReference>
<dbReference type="GO" id="GO:0003824">
    <property type="term" value="F:catalytic activity"/>
    <property type="evidence" value="ECO:0007669"/>
    <property type="project" value="InterPro"/>
</dbReference>
<dbReference type="GO" id="GO:0042254">
    <property type="term" value="P:ribosome biogenesis"/>
    <property type="evidence" value="ECO:0007669"/>
    <property type="project" value="UniProtKB-KW"/>
</dbReference>
<dbReference type="GO" id="GO:0006396">
    <property type="term" value="P:RNA processing"/>
    <property type="evidence" value="ECO:0007669"/>
    <property type="project" value="InterPro"/>
</dbReference>
<dbReference type="CDD" id="cd00875">
    <property type="entry name" value="RNA_Cyclase_Class_I"/>
    <property type="match status" value="1"/>
</dbReference>
<dbReference type="FunFam" id="3.30.360.20:FF:000001">
    <property type="entry name" value="RNA terminal phosphate cyclase-like 1"/>
    <property type="match status" value="1"/>
</dbReference>
<dbReference type="Gene3D" id="3.65.10.20">
    <property type="entry name" value="RNA 3'-terminal phosphate cyclase domain"/>
    <property type="match status" value="1"/>
</dbReference>
<dbReference type="Gene3D" id="3.30.360.20">
    <property type="entry name" value="RNA 3'-terminal phosphate cyclase, insert domain"/>
    <property type="match status" value="1"/>
</dbReference>
<dbReference type="InterPro" id="IPR013791">
    <property type="entry name" value="RNA3'-term_phos_cycl_insert"/>
</dbReference>
<dbReference type="InterPro" id="IPR023797">
    <property type="entry name" value="RNA3'_phos_cyclase_dom"/>
</dbReference>
<dbReference type="InterPro" id="IPR037136">
    <property type="entry name" value="RNA3'_phos_cyclase_dom_sf"/>
</dbReference>
<dbReference type="InterPro" id="IPR000228">
    <property type="entry name" value="RNA3'_term_phos_cyc"/>
</dbReference>
<dbReference type="InterPro" id="IPR016443">
    <property type="entry name" value="RNA3'_term_phos_cyc_type_2"/>
</dbReference>
<dbReference type="InterPro" id="IPR020719">
    <property type="entry name" value="RNA3'_term_phos_cycl-like_CS"/>
</dbReference>
<dbReference type="InterPro" id="IPR013792">
    <property type="entry name" value="RNA3'P_cycl/enolpyr_Trfase_a/b"/>
</dbReference>
<dbReference type="InterPro" id="IPR036553">
    <property type="entry name" value="RPTC_insert"/>
</dbReference>
<dbReference type="NCBIfam" id="TIGR03400">
    <property type="entry name" value="18S_RNA_Rcl1p"/>
    <property type="match status" value="1"/>
</dbReference>
<dbReference type="PANTHER" id="PTHR11096">
    <property type="entry name" value="RNA 3' TERMINAL PHOSPHATE CYCLASE"/>
    <property type="match status" value="1"/>
</dbReference>
<dbReference type="PANTHER" id="PTHR11096:SF1">
    <property type="entry name" value="RNA 3'-TERMINAL PHOSPHATE CYCLASE-LIKE PROTEIN"/>
    <property type="match status" value="1"/>
</dbReference>
<dbReference type="Pfam" id="PF01137">
    <property type="entry name" value="RTC"/>
    <property type="match status" value="1"/>
</dbReference>
<dbReference type="Pfam" id="PF05189">
    <property type="entry name" value="RTC_insert"/>
    <property type="match status" value="1"/>
</dbReference>
<dbReference type="SUPFAM" id="SSF55205">
    <property type="entry name" value="EPT/RTPC-like"/>
    <property type="match status" value="1"/>
</dbReference>
<dbReference type="PROSITE" id="PS01287">
    <property type="entry name" value="RTC"/>
    <property type="match status" value="1"/>
</dbReference>
<comment type="function">
    <text evidence="1">Does not have cyclase activity. Plays a role in 40S-ribosomal-subunit biogenesis in the early pre-rRNA processing steps at sites A0, A1 and A2 that are required for proper maturation of the 18S RNA (By similarity).</text>
</comment>
<comment type="subcellular location">
    <subcellularLocation>
        <location evidence="1">Nucleus</location>
        <location evidence="1">Nucleolus</location>
    </subcellularLocation>
</comment>
<comment type="similarity">
    <text evidence="2">Belongs to the RNA 3'-terminal cyclase family. Type 2 subfamily.</text>
</comment>
<accession>Q9C578</accession>
<proteinExistence type="evidence at transcript level"/>
<gene>
    <name type="ordered locus">At5g22100</name>
    <name type="ORF">T6G21.20</name>
</gene>
<keyword id="KW-0539">Nucleus</keyword>
<keyword id="KW-1185">Reference proteome</keyword>
<keyword id="KW-0690">Ribosome biogenesis</keyword>
<evidence type="ECO:0000250" key="1"/>
<evidence type="ECO:0000305" key="2"/>